<proteinExistence type="inferred from homology"/>
<accession>Q1JCL7</accession>
<evidence type="ECO:0000255" key="1">
    <source>
        <dbReference type="HAMAP-Rule" id="MF_01398"/>
    </source>
</evidence>
<reference key="1">
    <citation type="journal article" date="2006" name="Proc. Natl. Acad. Sci. U.S.A.">
        <title>Molecular genetic anatomy of inter- and intraserotype variation in the human bacterial pathogen group A Streptococcus.</title>
        <authorList>
            <person name="Beres S.B."/>
            <person name="Richter E.W."/>
            <person name="Nagiec M.J."/>
            <person name="Sumby P."/>
            <person name="Porcella S.F."/>
            <person name="DeLeo F.R."/>
            <person name="Musser J.M."/>
        </authorList>
    </citation>
    <scope>NUCLEOTIDE SEQUENCE [LARGE SCALE GENOMIC DNA]</scope>
    <source>
        <strain>MGAS2096</strain>
    </source>
</reference>
<organism>
    <name type="scientific">Streptococcus pyogenes serotype M12 (strain MGAS2096)</name>
    <dbReference type="NCBI Taxonomy" id="370553"/>
    <lineage>
        <taxon>Bacteria</taxon>
        <taxon>Bacillati</taxon>
        <taxon>Bacillota</taxon>
        <taxon>Bacilli</taxon>
        <taxon>Lactobacillales</taxon>
        <taxon>Streptococcaceae</taxon>
        <taxon>Streptococcus</taxon>
    </lineage>
</organism>
<sequence>MSITFGELVGNFILVTGSVIVLLLLIKKFAWGAIESILQTRSQQISRDIDQAEQSRLSAQQLEAKSQANLDASRSQASKIISDAKEIGQLQGDKLVAEATDEAKRLKEKALTDIEQSKSDAISAVKTEMSDLTVLLAEKIMGANLDKTAQSQLIDSYLDDLGEA</sequence>
<name>ATPF_STRPB</name>
<comment type="function">
    <text evidence="1">F(1)F(0) ATP synthase produces ATP from ADP in the presence of a proton or sodium gradient. F-type ATPases consist of two structural domains, F(1) containing the extramembraneous catalytic core and F(0) containing the membrane proton channel, linked together by a central stalk and a peripheral stalk. During catalysis, ATP synthesis in the catalytic domain of F(1) is coupled via a rotary mechanism of the central stalk subunits to proton translocation.</text>
</comment>
<comment type="function">
    <text evidence="1">Component of the F(0) channel, it forms part of the peripheral stalk, linking F(1) to F(0).</text>
</comment>
<comment type="subunit">
    <text evidence="1">F-type ATPases have 2 components, F(1) - the catalytic core - and F(0) - the membrane proton channel. F(1) has five subunits: alpha(3), beta(3), gamma(1), delta(1), epsilon(1). F(0) has three main subunits: a(1), b(2) and c(10-14). The alpha and beta chains form an alternating ring which encloses part of the gamma chain. F(1) is attached to F(0) by a central stalk formed by the gamma and epsilon chains, while a peripheral stalk is formed by the delta and b chains.</text>
</comment>
<comment type="subcellular location">
    <subcellularLocation>
        <location evidence="1">Cell membrane</location>
        <topology evidence="1">Single-pass membrane protein</topology>
    </subcellularLocation>
</comment>
<comment type="similarity">
    <text evidence="1">Belongs to the ATPase B chain family.</text>
</comment>
<dbReference type="EMBL" id="CP000261">
    <property type="protein sequence ID" value="ABF35691.1"/>
    <property type="molecule type" value="Genomic_DNA"/>
</dbReference>
<dbReference type="SMR" id="Q1JCL7"/>
<dbReference type="KEGG" id="spj:MGAS2096_Spy0639"/>
<dbReference type="HOGENOM" id="CLU_079215_4_2_9"/>
<dbReference type="GO" id="GO:0005886">
    <property type="term" value="C:plasma membrane"/>
    <property type="evidence" value="ECO:0007669"/>
    <property type="project" value="UniProtKB-SubCell"/>
</dbReference>
<dbReference type="GO" id="GO:0045259">
    <property type="term" value="C:proton-transporting ATP synthase complex"/>
    <property type="evidence" value="ECO:0007669"/>
    <property type="project" value="UniProtKB-KW"/>
</dbReference>
<dbReference type="GO" id="GO:0046933">
    <property type="term" value="F:proton-transporting ATP synthase activity, rotational mechanism"/>
    <property type="evidence" value="ECO:0007669"/>
    <property type="project" value="UniProtKB-UniRule"/>
</dbReference>
<dbReference type="GO" id="GO:0046961">
    <property type="term" value="F:proton-transporting ATPase activity, rotational mechanism"/>
    <property type="evidence" value="ECO:0007669"/>
    <property type="project" value="TreeGrafter"/>
</dbReference>
<dbReference type="CDD" id="cd06503">
    <property type="entry name" value="ATP-synt_Fo_b"/>
    <property type="match status" value="1"/>
</dbReference>
<dbReference type="HAMAP" id="MF_01398">
    <property type="entry name" value="ATP_synth_b_bprime"/>
    <property type="match status" value="1"/>
</dbReference>
<dbReference type="InterPro" id="IPR028987">
    <property type="entry name" value="ATP_synth_B-like_membr_sf"/>
</dbReference>
<dbReference type="InterPro" id="IPR002146">
    <property type="entry name" value="ATP_synth_b/b'su_bac/chlpt"/>
</dbReference>
<dbReference type="InterPro" id="IPR005864">
    <property type="entry name" value="ATP_synth_F0_bsu_bac"/>
</dbReference>
<dbReference type="InterPro" id="IPR050059">
    <property type="entry name" value="ATP_synthase_B_chain"/>
</dbReference>
<dbReference type="NCBIfam" id="TIGR01144">
    <property type="entry name" value="ATP_synt_b"/>
    <property type="match status" value="1"/>
</dbReference>
<dbReference type="PANTHER" id="PTHR33445:SF1">
    <property type="entry name" value="ATP SYNTHASE SUBUNIT B"/>
    <property type="match status" value="1"/>
</dbReference>
<dbReference type="PANTHER" id="PTHR33445">
    <property type="entry name" value="ATP SYNTHASE SUBUNIT B', CHLOROPLASTIC"/>
    <property type="match status" value="1"/>
</dbReference>
<dbReference type="Pfam" id="PF00430">
    <property type="entry name" value="ATP-synt_B"/>
    <property type="match status" value="1"/>
</dbReference>
<dbReference type="SUPFAM" id="SSF81573">
    <property type="entry name" value="F1F0 ATP synthase subunit B, membrane domain"/>
    <property type="match status" value="1"/>
</dbReference>
<gene>
    <name evidence="1" type="primary">atpF</name>
    <name type="ordered locus">MGAS2096_Spy0639</name>
</gene>
<keyword id="KW-0066">ATP synthesis</keyword>
<keyword id="KW-1003">Cell membrane</keyword>
<keyword id="KW-0138">CF(0)</keyword>
<keyword id="KW-0375">Hydrogen ion transport</keyword>
<keyword id="KW-0406">Ion transport</keyword>
<keyword id="KW-0472">Membrane</keyword>
<keyword id="KW-0812">Transmembrane</keyword>
<keyword id="KW-1133">Transmembrane helix</keyword>
<keyword id="KW-0813">Transport</keyword>
<protein>
    <recommendedName>
        <fullName evidence="1">ATP synthase subunit b</fullName>
    </recommendedName>
    <alternativeName>
        <fullName evidence="1">ATP synthase F(0) sector subunit b</fullName>
    </alternativeName>
    <alternativeName>
        <fullName evidence="1">ATPase subunit I</fullName>
    </alternativeName>
    <alternativeName>
        <fullName evidence="1">F-type ATPase subunit b</fullName>
        <shortName evidence="1">F-ATPase subunit b</shortName>
    </alternativeName>
</protein>
<feature type="chain" id="PRO_0000368802" description="ATP synthase subunit b">
    <location>
        <begin position="1"/>
        <end position="164"/>
    </location>
</feature>
<feature type="transmembrane region" description="Helical" evidence="1">
    <location>
        <begin position="6"/>
        <end position="26"/>
    </location>
</feature>